<comment type="function">
    <text evidence="1">Exoglycosidase that cleaves the single beta-linked mannose residue from the non-reducing end of beta-mannosidic oligosaccharides of various complexity and length. Prefers mannobiose over mannotriose and has no activity against polymeric mannan. Is also severely restricted by galactosyl substitutions at the +1 subsite (By similarity).</text>
</comment>
<comment type="catalytic activity">
    <reaction>
        <text>Hydrolysis of terminal, non-reducing beta-D-mannose residues in beta-D-mannosides.</text>
        <dbReference type="EC" id="3.2.1.25"/>
    </reaction>
</comment>
<comment type="pathway">
    <text>Glycan metabolism; N-glycan degradation.</text>
</comment>
<comment type="miscellaneous">
    <text evidence="1">In contrast to clade A beta-mannosidases, which are likely secreted, clade B proteins appear to be intracellular.</text>
</comment>
<comment type="similarity">
    <text evidence="3">Belongs to the glycosyl hydrolase 2 family. Beta-mannosidase B subfamily.</text>
</comment>
<gene>
    <name type="primary">mndB</name>
    <name type="ORF">AFLA_117830</name>
</gene>
<sequence>MAAFSQYPLSTGWSFKDSDDQSPEAWMPVPVVPSVAHQDLQANQKLKNPYIGFNELDARWVNDKSWTYRTVFQKPAVAAGSSIILAFDGLDTFATVKLDGSVILQSDNMFLAHRVDVTKALEAEGDHVLEIDFDCAMRRARELREKDTKHNWASFNGDPARMAVRKAQYHWGWDWGPLLSTAGIWREVRLEVYSAKISDLWTEVELASDHQTARVSAFTEVDAADSVDSYKASFLLSLHGKEVAREVATLKDKVAKVTFDVTQPSLWWPNGYGDPALYEISVSLEKEDCEIHSVSKKIGIRTAELIQQPDRHGKSFFFRINGVDVFCGGSCWIPADNLLPSITAERYRKWIELMVAGRQVMIRVWGGGCYEDDSFYQACDELGVLVWQDFMFGCGNYPTWPELLESIEKEANYNVRRLRHHPSIVVYVGNNEDYQVQESAGLVYDYEDKNPENWLKTDFPARYIYEKLLPSVVEKLSPKTVYHPGSPWGDGKITSDPTVGDMHQWNVWHGTQEKYQIFDTLGGRFNSEFGMEAFPHMSTIEYFVENEADKYPQSHVLDFHNKADGHERRIATYLVENLRTATDLETYVYLTQVVQAETMMFGYRGWRRQWGDERHCGGALLWQLNDCWPTISWAIVDYFLRPKPAFYAVARVLKPIAVGVRREHHDWSVTHAQPPKTSKYELWIASSLQKETVGTIELRFLSVNTGLDVRAPILRDNVKIVPNGTTNILEGVINHKAQPEPHVLAARLWVDGEVTARDVDWPQPFKYLDLSDRGLEVNKVSESGNEQKLLITAKKPVKCLVFEERDGIRVSDSAMDIVPGDGQTVTVTGLKAGDAPLKYKYLGQ</sequence>
<feature type="chain" id="PRO_0000394653" description="Beta-mannosidase B">
    <location>
        <begin position="1"/>
        <end position="844"/>
    </location>
</feature>
<feature type="active site" description="Proton donor" evidence="1">
    <location>
        <position position="432"/>
    </location>
</feature>
<feature type="glycosylation site" description="N-linked (GlcNAc...) asparagine" evidence="2">
    <location>
        <position position="723"/>
    </location>
</feature>
<keyword id="KW-0119">Carbohydrate metabolism</keyword>
<keyword id="KW-0325">Glycoprotein</keyword>
<keyword id="KW-0326">Glycosidase</keyword>
<keyword id="KW-0378">Hydrolase</keyword>
<keyword id="KW-0624">Polysaccharide degradation</keyword>
<name>MANBB_ASPFN</name>
<reference key="1">
    <citation type="journal article" date="2015" name="Genome Announc.">
        <title>Genome sequence of Aspergillus flavus NRRL 3357, a strain that causes aflatoxin contamination of food and feed.</title>
        <authorList>
            <person name="Nierman W.C."/>
            <person name="Yu J."/>
            <person name="Fedorova-Abrams N.D."/>
            <person name="Losada L."/>
            <person name="Cleveland T.E."/>
            <person name="Bhatnagar D."/>
            <person name="Bennett J.W."/>
            <person name="Dean R."/>
            <person name="Payne G.A."/>
        </authorList>
    </citation>
    <scope>NUCLEOTIDE SEQUENCE [LARGE SCALE GENOMIC DNA]</scope>
    <source>
        <strain>ATCC 200026 / FGSC A1120 / IAM 13836 / NRRL 3357 / JCM 12722 / SRRC 167</strain>
    </source>
</reference>
<proteinExistence type="inferred from homology"/>
<protein>
    <recommendedName>
        <fullName>Beta-mannosidase B</fullName>
        <ecNumber>3.2.1.25</ecNumber>
    </recommendedName>
    <alternativeName>
        <fullName>Mannanase B</fullName>
        <shortName>Mannase B</shortName>
    </alternativeName>
</protein>
<organism>
    <name type="scientific">Aspergillus flavus (strain ATCC 200026 / FGSC A1120 / IAM 13836 / NRRL 3357 / JCM 12722 / SRRC 167)</name>
    <dbReference type="NCBI Taxonomy" id="332952"/>
    <lineage>
        <taxon>Eukaryota</taxon>
        <taxon>Fungi</taxon>
        <taxon>Dikarya</taxon>
        <taxon>Ascomycota</taxon>
        <taxon>Pezizomycotina</taxon>
        <taxon>Eurotiomycetes</taxon>
        <taxon>Eurotiomycetidae</taxon>
        <taxon>Eurotiales</taxon>
        <taxon>Aspergillaceae</taxon>
        <taxon>Aspergillus</taxon>
        <taxon>Aspergillus subgen. Circumdati</taxon>
    </lineage>
</organism>
<dbReference type="EC" id="3.2.1.25"/>
<dbReference type="EMBL" id="EQ963485">
    <property type="protein sequence ID" value="EED45554.1"/>
    <property type="molecule type" value="Genomic_DNA"/>
</dbReference>
<dbReference type="RefSeq" id="XP_002384490.1">
    <property type="nucleotide sequence ID" value="XM_002384449.1"/>
</dbReference>
<dbReference type="SMR" id="B8NW36"/>
<dbReference type="STRING" id="332952.B8NW36"/>
<dbReference type="GlyCosmos" id="B8NW36">
    <property type="glycosylation" value="1 site, No reported glycans"/>
</dbReference>
<dbReference type="EnsemblFungi" id="EED45554">
    <property type="protein sequence ID" value="EED45554"/>
    <property type="gene ID" value="AFLA_117830"/>
</dbReference>
<dbReference type="VEuPathDB" id="FungiDB:AFLA_013762"/>
<dbReference type="eggNOG" id="KOG2230">
    <property type="taxonomic scope" value="Eukaryota"/>
</dbReference>
<dbReference type="HOGENOM" id="CLU_005015_1_0_1"/>
<dbReference type="OMA" id="MFANFDY"/>
<dbReference type="UniPathway" id="UPA00280"/>
<dbReference type="GO" id="GO:0004567">
    <property type="term" value="F:beta-mannosidase activity"/>
    <property type="evidence" value="ECO:0007669"/>
    <property type="project" value="UniProtKB-EC"/>
</dbReference>
<dbReference type="GO" id="GO:0006516">
    <property type="term" value="P:glycoprotein catabolic process"/>
    <property type="evidence" value="ECO:0007669"/>
    <property type="project" value="TreeGrafter"/>
</dbReference>
<dbReference type="GO" id="GO:0000272">
    <property type="term" value="P:polysaccharide catabolic process"/>
    <property type="evidence" value="ECO:0007669"/>
    <property type="project" value="UniProtKB-KW"/>
</dbReference>
<dbReference type="FunFam" id="2.60.120.260:FF:000118">
    <property type="entry name" value="Beta-mannosidase B"/>
    <property type="match status" value="1"/>
</dbReference>
<dbReference type="FunFam" id="3.20.20.80:FF:000050">
    <property type="entry name" value="Beta-mannosidase B"/>
    <property type="match status" value="1"/>
</dbReference>
<dbReference type="FunFam" id="2.60.40.10:FF:001725">
    <property type="entry name" value="Exo-beta-D-glucosaminidase"/>
    <property type="match status" value="1"/>
</dbReference>
<dbReference type="Gene3D" id="2.60.120.260">
    <property type="entry name" value="Galactose-binding domain-like"/>
    <property type="match status" value="1"/>
</dbReference>
<dbReference type="Gene3D" id="3.20.20.80">
    <property type="entry name" value="Glycosidases"/>
    <property type="match status" value="1"/>
</dbReference>
<dbReference type="Gene3D" id="2.60.40.10">
    <property type="entry name" value="Immunoglobulins"/>
    <property type="match status" value="1"/>
</dbReference>
<dbReference type="InterPro" id="IPR036156">
    <property type="entry name" value="Beta-gal/glucu_dom_sf"/>
</dbReference>
<dbReference type="InterPro" id="IPR054593">
    <property type="entry name" value="Beta-mannosidase-like_N2"/>
</dbReference>
<dbReference type="InterPro" id="IPR050887">
    <property type="entry name" value="Beta-mannosidase_GH2"/>
</dbReference>
<dbReference type="InterPro" id="IPR008979">
    <property type="entry name" value="Galactose-bd-like_sf"/>
</dbReference>
<dbReference type="InterPro" id="IPR006102">
    <property type="entry name" value="Glyco_hydro_2_Ig-like"/>
</dbReference>
<dbReference type="InterPro" id="IPR017853">
    <property type="entry name" value="Glycoside_hydrolase_SF"/>
</dbReference>
<dbReference type="InterPro" id="IPR013783">
    <property type="entry name" value="Ig-like_fold"/>
</dbReference>
<dbReference type="InterPro" id="IPR041447">
    <property type="entry name" value="Mannosidase_ig"/>
</dbReference>
<dbReference type="PANTHER" id="PTHR43730">
    <property type="entry name" value="BETA-MANNOSIDASE"/>
    <property type="match status" value="1"/>
</dbReference>
<dbReference type="PANTHER" id="PTHR43730:SF1">
    <property type="entry name" value="BETA-MANNOSIDASE"/>
    <property type="match status" value="1"/>
</dbReference>
<dbReference type="Pfam" id="PF00703">
    <property type="entry name" value="Glyco_hydro_2"/>
    <property type="match status" value="1"/>
</dbReference>
<dbReference type="Pfam" id="PF22666">
    <property type="entry name" value="Glyco_hydro_2_N2"/>
    <property type="match status" value="1"/>
</dbReference>
<dbReference type="Pfam" id="PF17786">
    <property type="entry name" value="Mannosidase_ig"/>
    <property type="match status" value="1"/>
</dbReference>
<dbReference type="SUPFAM" id="SSF51445">
    <property type="entry name" value="(Trans)glycosidases"/>
    <property type="match status" value="1"/>
</dbReference>
<dbReference type="SUPFAM" id="SSF49303">
    <property type="entry name" value="beta-Galactosidase/glucuronidase domain"/>
    <property type="match status" value="2"/>
</dbReference>
<dbReference type="SUPFAM" id="SSF49785">
    <property type="entry name" value="Galactose-binding domain-like"/>
    <property type="match status" value="1"/>
</dbReference>
<accession>B8NW36</accession>
<evidence type="ECO:0000250" key="1"/>
<evidence type="ECO:0000255" key="2"/>
<evidence type="ECO:0000305" key="3"/>